<comment type="function">
    <text evidence="1">GTPase that plays an essential role in the late steps of ribosome biogenesis.</text>
</comment>
<comment type="subunit">
    <text evidence="1">Associates with the 50S ribosomal subunit.</text>
</comment>
<comment type="similarity">
    <text evidence="1">Belongs to the TRAFAC class TrmE-Era-EngA-EngB-Septin-like GTPase superfamily. EngA (Der) GTPase family.</text>
</comment>
<keyword id="KW-0342">GTP-binding</keyword>
<keyword id="KW-0547">Nucleotide-binding</keyword>
<keyword id="KW-1185">Reference proteome</keyword>
<keyword id="KW-0677">Repeat</keyword>
<keyword id="KW-0690">Ribosome biogenesis</keyword>
<accession>Q5LR04</accession>
<protein>
    <recommendedName>
        <fullName evidence="1">GTPase Der</fullName>
    </recommendedName>
    <alternativeName>
        <fullName evidence="1">GTP-binding protein EngA</fullName>
    </alternativeName>
</protein>
<organism>
    <name type="scientific">Ruegeria pomeroyi (strain ATCC 700808 / DSM 15171 / DSS-3)</name>
    <name type="common">Silicibacter pomeroyi</name>
    <dbReference type="NCBI Taxonomy" id="246200"/>
    <lineage>
        <taxon>Bacteria</taxon>
        <taxon>Pseudomonadati</taxon>
        <taxon>Pseudomonadota</taxon>
        <taxon>Alphaproteobacteria</taxon>
        <taxon>Rhodobacterales</taxon>
        <taxon>Roseobacteraceae</taxon>
        <taxon>Ruegeria</taxon>
    </lineage>
</organism>
<evidence type="ECO:0000255" key="1">
    <source>
        <dbReference type="HAMAP-Rule" id="MF_00195"/>
    </source>
</evidence>
<evidence type="ECO:0000256" key="2">
    <source>
        <dbReference type="SAM" id="MobiDB-lite"/>
    </source>
</evidence>
<reference key="1">
    <citation type="journal article" date="2004" name="Nature">
        <title>Genome sequence of Silicibacter pomeroyi reveals adaptations to the marine environment.</title>
        <authorList>
            <person name="Moran M.A."/>
            <person name="Buchan A."/>
            <person name="Gonzalez J.M."/>
            <person name="Heidelberg J.F."/>
            <person name="Whitman W.B."/>
            <person name="Kiene R.P."/>
            <person name="Henriksen J.R."/>
            <person name="King G.M."/>
            <person name="Belas R."/>
            <person name="Fuqua C."/>
            <person name="Brinkac L.M."/>
            <person name="Lewis M."/>
            <person name="Johri S."/>
            <person name="Weaver B."/>
            <person name="Pai G."/>
            <person name="Eisen J.A."/>
            <person name="Rahe E."/>
            <person name="Sheldon W.M."/>
            <person name="Ye W."/>
            <person name="Miller T.R."/>
            <person name="Carlton J."/>
            <person name="Rasko D.A."/>
            <person name="Paulsen I.T."/>
            <person name="Ren Q."/>
            <person name="Daugherty S.C."/>
            <person name="DeBoy R.T."/>
            <person name="Dodson R.J."/>
            <person name="Durkin A.S."/>
            <person name="Madupu R."/>
            <person name="Nelson W.C."/>
            <person name="Sullivan S.A."/>
            <person name="Rosovitz M.J."/>
            <person name="Haft D.H."/>
            <person name="Selengut J."/>
            <person name="Ward N."/>
        </authorList>
    </citation>
    <scope>NUCLEOTIDE SEQUENCE [LARGE SCALE GENOMIC DNA]</scope>
    <source>
        <strain>ATCC 700808 / DSM 15171 / DSS-3</strain>
    </source>
</reference>
<reference key="2">
    <citation type="journal article" date="2014" name="Stand. Genomic Sci.">
        <title>An updated genome annotation for the model marine bacterium Ruegeria pomeroyi DSS-3.</title>
        <authorList>
            <person name="Rivers A.R."/>
            <person name="Smith C.B."/>
            <person name="Moran M.A."/>
        </authorList>
    </citation>
    <scope>GENOME REANNOTATION</scope>
    <source>
        <strain>ATCC 700808 / DSM 15171 / DSS-3</strain>
    </source>
</reference>
<feature type="chain" id="PRO_1000011743" description="GTPase Der">
    <location>
        <begin position="1"/>
        <end position="487"/>
    </location>
</feature>
<feature type="domain" description="EngA-type G 1">
    <location>
        <begin position="3"/>
        <end position="167"/>
    </location>
</feature>
<feature type="domain" description="EngA-type G 2">
    <location>
        <begin position="203"/>
        <end position="378"/>
    </location>
</feature>
<feature type="domain" description="KH-like" evidence="1">
    <location>
        <begin position="379"/>
        <end position="465"/>
    </location>
</feature>
<feature type="region of interest" description="Disordered" evidence="2">
    <location>
        <begin position="167"/>
        <end position="191"/>
    </location>
</feature>
<feature type="region of interest" description="Disordered" evidence="2">
    <location>
        <begin position="458"/>
        <end position="487"/>
    </location>
</feature>
<feature type="compositionally biased region" description="Acidic residues" evidence="2">
    <location>
        <begin position="167"/>
        <end position="190"/>
    </location>
</feature>
<feature type="compositionally biased region" description="Basic residues" evidence="2">
    <location>
        <begin position="468"/>
        <end position="487"/>
    </location>
</feature>
<feature type="binding site" evidence="1">
    <location>
        <begin position="9"/>
        <end position="16"/>
    </location>
    <ligand>
        <name>GTP</name>
        <dbReference type="ChEBI" id="CHEBI:37565"/>
        <label>1</label>
    </ligand>
</feature>
<feature type="binding site" evidence="1">
    <location>
        <begin position="56"/>
        <end position="60"/>
    </location>
    <ligand>
        <name>GTP</name>
        <dbReference type="ChEBI" id="CHEBI:37565"/>
        <label>1</label>
    </ligand>
</feature>
<feature type="binding site" evidence="1">
    <location>
        <begin position="119"/>
        <end position="122"/>
    </location>
    <ligand>
        <name>GTP</name>
        <dbReference type="ChEBI" id="CHEBI:37565"/>
        <label>1</label>
    </ligand>
</feature>
<feature type="binding site" evidence="1">
    <location>
        <begin position="209"/>
        <end position="216"/>
    </location>
    <ligand>
        <name>GTP</name>
        <dbReference type="ChEBI" id="CHEBI:37565"/>
        <label>2</label>
    </ligand>
</feature>
<feature type="binding site" evidence="1">
    <location>
        <begin position="256"/>
        <end position="260"/>
    </location>
    <ligand>
        <name>GTP</name>
        <dbReference type="ChEBI" id="CHEBI:37565"/>
        <label>2</label>
    </ligand>
</feature>
<feature type="binding site" evidence="1">
    <location>
        <begin position="321"/>
        <end position="324"/>
    </location>
    <ligand>
        <name>GTP</name>
        <dbReference type="ChEBI" id="CHEBI:37565"/>
        <label>2</label>
    </ligand>
</feature>
<name>DER_RUEPO</name>
<proteinExistence type="inferred from homology"/>
<sequence>MSLTLAIVGRPNVGKSTLFNRLVGKRLALVDDQPGVTRDLREGQARLGDLRFTVIDTAGLETATDDSLQGRMRRLTERAVDMADICLFMIDARAGVTPNDEIFADILRRRSAHVILAANKAEGAAADAGVIEAYGLGLGEPIRLSAEHGEGLNELYAVLMPLADEMEQQAEEQAPETDVDLDPEDEDGEEVAAPHAITREKPLQVAVVGRPNAGKSTLINRILGEDRLLTGPEAGITRDAISLQIDWNDTPMRIFDTAGMRKKAKVQEKLEKLSVSDGLRAVKFAEVVVVLLDAAIPFEQQDLRIADLAEREGRAVVIAVNKWDVEENKQDKLRELKESFERLLPQLRGAPLVTVSAKTGRGLERLHDAILRAHEVWNRRIPTAALNRWLIGMLEQHPPPAPQGKRIKLRYMTQAKTRPPGFVVMCSHPDKMPESYSRYLVNGLRADFDMPGTPIRLTLRGQGDKNPYKGRRKKNAGALAKHLKSRG</sequence>
<dbReference type="EMBL" id="CP000031">
    <property type="protein sequence ID" value="AAV95590.1"/>
    <property type="molecule type" value="Genomic_DNA"/>
</dbReference>
<dbReference type="RefSeq" id="WP_011048045.1">
    <property type="nucleotide sequence ID" value="NC_003911.12"/>
</dbReference>
<dbReference type="SMR" id="Q5LR04"/>
<dbReference type="STRING" id="246200.SPO2328"/>
<dbReference type="PaxDb" id="246200-SPO2328"/>
<dbReference type="KEGG" id="sil:SPO2328"/>
<dbReference type="eggNOG" id="COG1160">
    <property type="taxonomic scope" value="Bacteria"/>
</dbReference>
<dbReference type="HOGENOM" id="CLU_016077_5_0_5"/>
<dbReference type="OrthoDB" id="9805918at2"/>
<dbReference type="Proteomes" id="UP000001023">
    <property type="component" value="Chromosome"/>
</dbReference>
<dbReference type="GO" id="GO:0005525">
    <property type="term" value="F:GTP binding"/>
    <property type="evidence" value="ECO:0007669"/>
    <property type="project" value="UniProtKB-UniRule"/>
</dbReference>
<dbReference type="GO" id="GO:0042254">
    <property type="term" value="P:ribosome biogenesis"/>
    <property type="evidence" value="ECO:0007669"/>
    <property type="project" value="UniProtKB-KW"/>
</dbReference>
<dbReference type="CDD" id="cd01894">
    <property type="entry name" value="EngA1"/>
    <property type="match status" value="1"/>
</dbReference>
<dbReference type="CDD" id="cd01895">
    <property type="entry name" value="EngA2"/>
    <property type="match status" value="1"/>
</dbReference>
<dbReference type="FunFam" id="3.30.300.20:FF:000004">
    <property type="entry name" value="GTPase Der"/>
    <property type="match status" value="1"/>
</dbReference>
<dbReference type="Gene3D" id="3.30.300.20">
    <property type="match status" value="1"/>
</dbReference>
<dbReference type="Gene3D" id="3.40.50.300">
    <property type="entry name" value="P-loop containing nucleotide triphosphate hydrolases"/>
    <property type="match status" value="2"/>
</dbReference>
<dbReference type="HAMAP" id="MF_00195">
    <property type="entry name" value="GTPase_Der"/>
    <property type="match status" value="1"/>
</dbReference>
<dbReference type="InterPro" id="IPR031166">
    <property type="entry name" value="G_ENGA"/>
</dbReference>
<dbReference type="InterPro" id="IPR006073">
    <property type="entry name" value="GTP-bd"/>
</dbReference>
<dbReference type="InterPro" id="IPR016484">
    <property type="entry name" value="GTPase_Der"/>
</dbReference>
<dbReference type="InterPro" id="IPR032859">
    <property type="entry name" value="KH_dom-like"/>
</dbReference>
<dbReference type="InterPro" id="IPR015946">
    <property type="entry name" value="KH_dom-like_a/b"/>
</dbReference>
<dbReference type="InterPro" id="IPR027417">
    <property type="entry name" value="P-loop_NTPase"/>
</dbReference>
<dbReference type="InterPro" id="IPR005225">
    <property type="entry name" value="Small_GTP-bd"/>
</dbReference>
<dbReference type="NCBIfam" id="TIGR03594">
    <property type="entry name" value="GTPase_EngA"/>
    <property type="match status" value="1"/>
</dbReference>
<dbReference type="NCBIfam" id="TIGR00231">
    <property type="entry name" value="small_GTP"/>
    <property type="match status" value="2"/>
</dbReference>
<dbReference type="PANTHER" id="PTHR43834">
    <property type="entry name" value="GTPASE DER"/>
    <property type="match status" value="1"/>
</dbReference>
<dbReference type="PANTHER" id="PTHR43834:SF6">
    <property type="entry name" value="GTPASE DER"/>
    <property type="match status" value="1"/>
</dbReference>
<dbReference type="Pfam" id="PF14714">
    <property type="entry name" value="KH_dom-like"/>
    <property type="match status" value="1"/>
</dbReference>
<dbReference type="Pfam" id="PF01926">
    <property type="entry name" value="MMR_HSR1"/>
    <property type="match status" value="2"/>
</dbReference>
<dbReference type="PIRSF" id="PIRSF006485">
    <property type="entry name" value="GTP-binding_EngA"/>
    <property type="match status" value="1"/>
</dbReference>
<dbReference type="PRINTS" id="PR00449">
    <property type="entry name" value="RASTRNSFRMNG"/>
</dbReference>
<dbReference type="SUPFAM" id="SSF52540">
    <property type="entry name" value="P-loop containing nucleoside triphosphate hydrolases"/>
    <property type="match status" value="2"/>
</dbReference>
<dbReference type="PROSITE" id="PS51712">
    <property type="entry name" value="G_ENGA"/>
    <property type="match status" value="2"/>
</dbReference>
<gene>
    <name evidence="1" type="primary">der</name>
    <name type="synonym">engA</name>
    <name type="ordered locus">SPO2328</name>
</gene>